<reference key="1">
    <citation type="journal article" date="2001" name="Lancet">
        <title>Whole genome sequencing of meticillin-resistant Staphylococcus aureus.</title>
        <authorList>
            <person name="Kuroda M."/>
            <person name="Ohta T."/>
            <person name="Uchiyama I."/>
            <person name="Baba T."/>
            <person name="Yuzawa H."/>
            <person name="Kobayashi I."/>
            <person name="Cui L."/>
            <person name="Oguchi A."/>
            <person name="Aoki K."/>
            <person name="Nagai Y."/>
            <person name="Lian J.-Q."/>
            <person name="Ito T."/>
            <person name="Kanamori M."/>
            <person name="Matsumaru H."/>
            <person name="Maruyama A."/>
            <person name="Murakami H."/>
            <person name="Hosoyama A."/>
            <person name="Mizutani-Ui Y."/>
            <person name="Takahashi N.K."/>
            <person name="Sawano T."/>
            <person name="Inoue R."/>
            <person name="Kaito C."/>
            <person name="Sekimizu K."/>
            <person name="Hirakawa H."/>
            <person name="Kuhara S."/>
            <person name="Goto S."/>
            <person name="Yabuzaki J."/>
            <person name="Kanehisa M."/>
            <person name="Yamashita A."/>
            <person name="Oshima K."/>
            <person name="Furuya K."/>
            <person name="Yoshino C."/>
            <person name="Shiba T."/>
            <person name="Hattori M."/>
            <person name="Ogasawara N."/>
            <person name="Hayashi H."/>
            <person name="Hiramatsu K."/>
        </authorList>
    </citation>
    <scope>NUCLEOTIDE SEQUENCE [LARGE SCALE GENOMIC DNA]</scope>
    <source>
        <strain>Mu50 / ATCC 700699</strain>
    </source>
</reference>
<evidence type="ECO:0000255" key="1">
    <source>
        <dbReference type="HAMAP-Rule" id="MF_01156"/>
    </source>
</evidence>
<organism>
    <name type="scientific">Staphylococcus aureus (strain Mu50 / ATCC 700699)</name>
    <dbReference type="NCBI Taxonomy" id="158878"/>
    <lineage>
        <taxon>Bacteria</taxon>
        <taxon>Bacillati</taxon>
        <taxon>Bacillota</taxon>
        <taxon>Bacilli</taxon>
        <taxon>Bacillales</taxon>
        <taxon>Staphylococcaceae</taxon>
        <taxon>Staphylococcus</taxon>
    </lineage>
</organism>
<protein>
    <recommendedName>
        <fullName evidence="1">Iron-sulfur cluster repair protein ScdA</fullName>
    </recommendedName>
</protein>
<accession>Q99WW4</accession>
<sequence length="224" mass="25468">MINKNDIVADIVIDYPKAADIFRSVGIDFCCGGQVSIEAASLEKKNVDLNELLQRLNDVEQTNTPGSLNPKFLNVSSLIQYIQAAYHEPLREEFKNLTPYVTKLSKVHGPNHPYLVELKETYDTFKSGMLEHMQKEDDVDFPKLIKYEQGEVVNDINTVIDDLVSDHIATGQLLVKMSDLTSSYEPPIEACGTWRLVYQRLKALEVLTHEHVHLENHVLFKKVS</sequence>
<keyword id="KW-0963">Cytoplasm</keyword>
<keyword id="KW-0408">Iron</keyword>
<keyword id="KW-0479">Metal-binding</keyword>
<keyword id="KW-0346">Stress response</keyword>
<comment type="function">
    <text evidence="1">Di-iron-containing protein involved in the repair of iron-sulfur clusters damaged by oxidative and nitrosative stress conditions.</text>
</comment>
<comment type="subunit">
    <text evidence="1">Homodimer.</text>
</comment>
<comment type="subcellular location">
    <subcellularLocation>
        <location evidence="1">Cytoplasm</location>
    </subcellularLocation>
</comment>
<comment type="similarity">
    <text evidence="1">Belongs to the RIC family. ScdA subfamily.</text>
</comment>
<feature type="chain" id="PRO_0000220336" description="Iron-sulfur cluster repair protein ScdA">
    <location>
        <begin position="1"/>
        <end position="224"/>
    </location>
</feature>
<dbReference type="EMBL" id="BA000017">
    <property type="protein sequence ID" value="BAB56421.1"/>
    <property type="molecule type" value="Genomic_DNA"/>
</dbReference>
<dbReference type="RefSeq" id="WP_000608818.1">
    <property type="nucleotide sequence ID" value="NC_002758.2"/>
</dbReference>
<dbReference type="SMR" id="Q99WW4"/>
<dbReference type="KEGG" id="sav:SAV0259"/>
<dbReference type="HOGENOM" id="CLU_076075_0_1_9"/>
<dbReference type="PhylomeDB" id="Q99WW4"/>
<dbReference type="Proteomes" id="UP000002481">
    <property type="component" value="Chromosome"/>
</dbReference>
<dbReference type="GO" id="GO:0005737">
    <property type="term" value="C:cytoplasm"/>
    <property type="evidence" value="ECO:0007669"/>
    <property type="project" value="UniProtKB-SubCell"/>
</dbReference>
<dbReference type="GO" id="GO:0046872">
    <property type="term" value="F:metal ion binding"/>
    <property type="evidence" value="ECO:0007669"/>
    <property type="project" value="UniProtKB-KW"/>
</dbReference>
<dbReference type="GO" id="GO:0030091">
    <property type="term" value="P:protein repair"/>
    <property type="evidence" value="ECO:0007669"/>
    <property type="project" value="UniProtKB-UniRule"/>
</dbReference>
<dbReference type="GO" id="GO:0051409">
    <property type="term" value="P:response to nitrosative stress"/>
    <property type="evidence" value="ECO:0007669"/>
    <property type="project" value="UniProtKB-UniRule"/>
</dbReference>
<dbReference type="GO" id="GO:0006979">
    <property type="term" value="P:response to oxidative stress"/>
    <property type="evidence" value="ECO:0007669"/>
    <property type="project" value="UniProtKB-UniRule"/>
</dbReference>
<dbReference type="FunFam" id="1.20.120.520:FF:000003">
    <property type="entry name" value="Iron-sulfur cluster repair protein ScdA"/>
    <property type="match status" value="1"/>
</dbReference>
<dbReference type="Gene3D" id="1.20.120.520">
    <property type="entry name" value="nmb1532 protein domain like"/>
    <property type="match status" value="1"/>
</dbReference>
<dbReference type="Gene3D" id="1.10.3910.10">
    <property type="entry name" value="SP0561-like"/>
    <property type="match status" value="1"/>
</dbReference>
<dbReference type="HAMAP" id="MF_01156">
    <property type="entry name" value="RIC_ScdA"/>
    <property type="match status" value="1"/>
</dbReference>
<dbReference type="InterPro" id="IPR012312">
    <property type="entry name" value="Hemerythrin-like"/>
</dbReference>
<dbReference type="InterPro" id="IPR019903">
    <property type="entry name" value="RIC_family"/>
</dbReference>
<dbReference type="InterPro" id="IPR023551">
    <property type="entry name" value="ScdA"/>
</dbReference>
<dbReference type="InterPro" id="IPR038062">
    <property type="entry name" value="ScdA-like_N_sf"/>
</dbReference>
<dbReference type="NCBIfam" id="TIGR03652">
    <property type="entry name" value="FeS_repair_RIC"/>
    <property type="match status" value="1"/>
</dbReference>
<dbReference type="NCBIfam" id="NF009777">
    <property type="entry name" value="PRK13276.1"/>
    <property type="match status" value="1"/>
</dbReference>
<dbReference type="PANTHER" id="PTHR36438">
    <property type="entry name" value="IRON-SULFUR CLUSTER REPAIR PROTEIN YTFE"/>
    <property type="match status" value="1"/>
</dbReference>
<dbReference type="PANTHER" id="PTHR36438:SF1">
    <property type="entry name" value="IRON-SULFUR CLUSTER REPAIR PROTEIN YTFE"/>
    <property type="match status" value="1"/>
</dbReference>
<dbReference type="Pfam" id="PF01814">
    <property type="entry name" value="Hemerythrin"/>
    <property type="match status" value="1"/>
</dbReference>
<dbReference type="Pfam" id="PF04405">
    <property type="entry name" value="ScdA_N"/>
    <property type="match status" value="1"/>
</dbReference>
<dbReference type="SUPFAM" id="SSF140683">
    <property type="entry name" value="SP0561-like"/>
    <property type="match status" value="1"/>
</dbReference>
<name>SCDA_STAAM</name>
<gene>
    <name evidence="1" type="primary">scdA</name>
    <name type="ordered locus">SAV0259</name>
</gene>
<proteinExistence type="inferred from homology"/>